<comment type="function">
    <text evidence="1">O-methyltransferase that catalyzes the 2 O-methylation steps in the ubiquinone biosynthetic pathway.</text>
</comment>
<comment type="catalytic activity">
    <reaction evidence="1">
        <text>a 3-demethylubiquinol + S-adenosyl-L-methionine = a ubiquinol + S-adenosyl-L-homocysteine + H(+)</text>
        <dbReference type="Rhea" id="RHEA:44380"/>
        <dbReference type="Rhea" id="RHEA-COMP:9566"/>
        <dbReference type="Rhea" id="RHEA-COMP:10914"/>
        <dbReference type="ChEBI" id="CHEBI:15378"/>
        <dbReference type="ChEBI" id="CHEBI:17976"/>
        <dbReference type="ChEBI" id="CHEBI:57856"/>
        <dbReference type="ChEBI" id="CHEBI:59789"/>
        <dbReference type="ChEBI" id="CHEBI:84422"/>
        <dbReference type="EC" id="2.1.1.64"/>
    </reaction>
</comment>
<comment type="catalytic activity">
    <reaction evidence="1">
        <text>a 3-(all-trans-polyprenyl)benzene-1,2-diol + S-adenosyl-L-methionine = a 2-methoxy-6-(all-trans-polyprenyl)phenol + S-adenosyl-L-homocysteine + H(+)</text>
        <dbReference type="Rhea" id="RHEA:31411"/>
        <dbReference type="Rhea" id="RHEA-COMP:9550"/>
        <dbReference type="Rhea" id="RHEA-COMP:9551"/>
        <dbReference type="ChEBI" id="CHEBI:15378"/>
        <dbReference type="ChEBI" id="CHEBI:57856"/>
        <dbReference type="ChEBI" id="CHEBI:59789"/>
        <dbReference type="ChEBI" id="CHEBI:62729"/>
        <dbReference type="ChEBI" id="CHEBI:62731"/>
        <dbReference type="EC" id="2.1.1.222"/>
    </reaction>
</comment>
<comment type="pathway">
    <text evidence="1">Cofactor biosynthesis; ubiquinone biosynthesis.</text>
</comment>
<comment type="similarity">
    <text evidence="1">Belongs to the methyltransferase superfamily. UbiG/COQ3 family.</text>
</comment>
<protein>
    <recommendedName>
        <fullName evidence="1">Ubiquinone biosynthesis O-methyltransferase</fullName>
    </recommendedName>
    <alternativeName>
        <fullName evidence="1">2-polyprenyl-6-hydroxyphenol methylase</fullName>
        <ecNumber evidence="1">2.1.1.222</ecNumber>
    </alternativeName>
    <alternativeName>
        <fullName evidence="1">3-demethylubiquinone 3-O-methyltransferase</fullName>
        <ecNumber evidence="1">2.1.1.64</ecNumber>
    </alternativeName>
</protein>
<accession>B8F4B1</accession>
<name>UBIG_GLAP5</name>
<gene>
    <name evidence="1" type="primary">ubiG</name>
    <name type="ordered locus">HAPS_0498</name>
</gene>
<reference key="1">
    <citation type="journal article" date="2009" name="J. Bacteriol.">
        <title>Complete genome sequence of Haemophilus parasuis SH0165.</title>
        <authorList>
            <person name="Yue M."/>
            <person name="Yang F."/>
            <person name="Yang J."/>
            <person name="Bei W."/>
            <person name="Cai X."/>
            <person name="Chen L."/>
            <person name="Dong J."/>
            <person name="Zhou R."/>
            <person name="Jin M."/>
            <person name="Jin Q."/>
            <person name="Chen H."/>
        </authorList>
    </citation>
    <scope>NUCLEOTIDE SEQUENCE [LARGE SCALE GENOMIC DNA]</scope>
    <source>
        <strain>SH0165</strain>
    </source>
</reference>
<keyword id="KW-0489">Methyltransferase</keyword>
<keyword id="KW-1185">Reference proteome</keyword>
<keyword id="KW-0949">S-adenosyl-L-methionine</keyword>
<keyword id="KW-0808">Transferase</keyword>
<keyword id="KW-0831">Ubiquinone biosynthesis</keyword>
<feature type="chain" id="PRO_1000135505" description="Ubiquinone biosynthesis O-methyltransferase">
    <location>
        <begin position="1"/>
        <end position="236"/>
    </location>
</feature>
<feature type="binding site" evidence="1">
    <location>
        <position position="36"/>
    </location>
    <ligand>
        <name>S-adenosyl-L-methionine</name>
        <dbReference type="ChEBI" id="CHEBI:59789"/>
    </ligand>
</feature>
<feature type="binding site" evidence="1">
    <location>
        <position position="56"/>
    </location>
    <ligand>
        <name>S-adenosyl-L-methionine</name>
        <dbReference type="ChEBI" id="CHEBI:59789"/>
    </ligand>
</feature>
<feature type="binding site" evidence="1">
    <location>
        <position position="77"/>
    </location>
    <ligand>
        <name>S-adenosyl-L-methionine</name>
        <dbReference type="ChEBI" id="CHEBI:59789"/>
    </ligand>
</feature>
<feature type="binding site" evidence="1">
    <location>
        <position position="125"/>
    </location>
    <ligand>
        <name>S-adenosyl-L-methionine</name>
        <dbReference type="ChEBI" id="CHEBI:59789"/>
    </ligand>
</feature>
<dbReference type="EC" id="2.1.1.222" evidence="1"/>
<dbReference type="EC" id="2.1.1.64" evidence="1"/>
<dbReference type="EMBL" id="CP001321">
    <property type="protein sequence ID" value="ACL32163.1"/>
    <property type="molecule type" value="Genomic_DNA"/>
</dbReference>
<dbReference type="RefSeq" id="WP_005711610.1">
    <property type="nucleotide sequence ID" value="NC_011852.1"/>
</dbReference>
<dbReference type="SMR" id="B8F4B1"/>
<dbReference type="STRING" id="557723.HAPS_0498"/>
<dbReference type="GeneID" id="66618935"/>
<dbReference type="KEGG" id="hap:HAPS_0498"/>
<dbReference type="HOGENOM" id="CLU_042432_5_0_6"/>
<dbReference type="UniPathway" id="UPA00232"/>
<dbReference type="Proteomes" id="UP000006743">
    <property type="component" value="Chromosome"/>
</dbReference>
<dbReference type="GO" id="GO:0102208">
    <property type="term" value="F:2-polyprenyl-6-hydroxyphenol methylase activity"/>
    <property type="evidence" value="ECO:0007669"/>
    <property type="project" value="UniProtKB-EC"/>
</dbReference>
<dbReference type="GO" id="GO:0061542">
    <property type="term" value="F:3-demethylubiquinol 3-O-methyltransferase activity"/>
    <property type="evidence" value="ECO:0007669"/>
    <property type="project" value="UniProtKB-UniRule"/>
</dbReference>
<dbReference type="GO" id="GO:0010420">
    <property type="term" value="F:polyprenyldihydroxybenzoate methyltransferase activity"/>
    <property type="evidence" value="ECO:0007669"/>
    <property type="project" value="InterPro"/>
</dbReference>
<dbReference type="GO" id="GO:0032259">
    <property type="term" value="P:methylation"/>
    <property type="evidence" value="ECO:0007669"/>
    <property type="project" value="UniProtKB-KW"/>
</dbReference>
<dbReference type="CDD" id="cd02440">
    <property type="entry name" value="AdoMet_MTases"/>
    <property type="match status" value="1"/>
</dbReference>
<dbReference type="FunFam" id="3.40.50.150:FF:000028">
    <property type="entry name" value="Ubiquinone biosynthesis O-methyltransferase"/>
    <property type="match status" value="1"/>
</dbReference>
<dbReference type="Gene3D" id="3.40.50.150">
    <property type="entry name" value="Vaccinia Virus protein VP39"/>
    <property type="match status" value="1"/>
</dbReference>
<dbReference type="HAMAP" id="MF_00472">
    <property type="entry name" value="UbiG"/>
    <property type="match status" value="1"/>
</dbReference>
<dbReference type="InterPro" id="IPR029063">
    <property type="entry name" value="SAM-dependent_MTases_sf"/>
</dbReference>
<dbReference type="InterPro" id="IPR010233">
    <property type="entry name" value="UbiG_MeTrfase"/>
</dbReference>
<dbReference type="NCBIfam" id="TIGR01983">
    <property type="entry name" value="UbiG"/>
    <property type="match status" value="1"/>
</dbReference>
<dbReference type="PANTHER" id="PTHR43464">
    <property type="entry name" value="METHYLTRANSFERASE"/>
    <property type="match status" value="1"/>
</dbReference>
<dbReference type="PANTHER" id="PTHR43464:SF19">
    <property type="entry name" value="UBIQUINONE BIOSYNTHESIS O-METHYLTRANSFERASE, MITOCHONDRIAL"/>
    <property type="match status" value="1"/>
</dbReference>
<dbReference type="Pfam" id="PF13489">
    <property type="entry name" value="Methyltransf_23"/>
    <property type="match status" value="1"/>
</dbReference>
<dbReference type="SUPFAM" id="SSF53335">
    <property type="entry name" value="S-adenosyl-L-methionine-dependent methyltransferases"/>
    <property type="match status" value="1"/>
</dbReference>
<organism>
    <name type="scientific">Glaesserella parasuis serovar 5 (strain SH0165)</name>
    <name type="common">Haemophilus parasuis</name>
    <dbReference type="NCBI Taxonomy" id="557723"/>
    <lineage>
        <taxon>Bacteria</taxon>
        <taxon>Pseudomonadati</taxon>
        <taxon>Pseudomonadota</taxon>
        <taxon>Gammaproteobacteria</taxon>
        <taxon>Pasteurellales</taxon>
        <taxon>Pasteurellaceae</taxon>
        <taxon>Glaesserella</taxon>
    </lineage>
</organism>
<proteinExistence type="inferred from homology"/>
<evidence type="ECO:0000255" key="1">
    <source>
        <dbReference type="HAMAP-Rule" id="MF_00472"/>
    </source>
</evidence>
<sequence>MNNIDQQEVEKFEKMAKTWWDPQGDFKPIHLLNPLRLAYINDKTNGLFGKKVLDIGCGGGILSESMAGLGAIVTGIDMAADALLVARQHAESNHLNICYQQITVEDFLKQHCITDTEKFDIITCMEVLEHVPNPHSIIQSCKNLLKEDGLLFISTINRTAKAYMLIIIGAEYVLKMLPKGTHNFEKFIKPSELLRWCSQEDFECKEIVGYHFNPLTKNFWINKDINCNYIAVLQNS</sequence>